<keyword id="KW-0997">Cell inner membrane</keyword>
<keyword id="KW-1003">Cell membrane</keyword>
<keyword id="KW-0472">Membrane</keyword>
<keyword id="KW-1185">Reference proteome</keyword>
<keyword id="KW-1277">Toxin-antitoxin system</keyword>
<keyword id="KW-0812">Transmembrane</keyword>
<keyword id="KW-1133">Transmembrane helix</keyword>
<accession>A5A627</accession>
<comment type="function">
    <text evidence="3 5 6 7 9">Toxic component of a type I toxin-antitoxin (TA) system (Probable) (PubMed:18761622). Overexpression causes cessation of growth, induces stress-response, a number of membrane protein genes, and leads to cell death (PubMed:15620655, PubMed:18710431, PubMed:18761622). Inhibits ATP synthesis, ATP levels drop drastically quickly after induction (PubMed:18761622, PubMed:24513967). Part of the programmed response to DNA damage; damage leads to increased accumulation of the protein which slows or stops bacterial growth, probably allowing DNA repair before cells continue to grow (PubMed:15620655, PubMed:18761622).</text>
</comment>
<comment type="subcellular location">
    <subcellularLocation>
        <location evidence="6 7">Cell inner membrane</location>
        <topology evidence="6 7">Single-pass membrane protein</topology>
    </subcellularLocation>
</comment>
<comment type="induction">
    <text evidence="2 3 4">Part of the SOS-response regulon, controlled by LexA; repressed by LexA, induced by DNA damage (PubMed:10760155). Antisense sRNA IstR-1 inhibits toxicity by inhibiting translation of tisAB mRNA; subsequent RNase 3 cleavage leads to a truncated mRNA. IstR-1 sequesters a standby ribosome binding site in the tisAB mRNA; as the levels of IstR-1 decrease during the SOS response this site opens and ribosomes are able to bind to initiate translation further downstream (PubMed:15620655, PubMed:17499044).</text>
</comment>
<comment type="disruption phenotype">
    <text evidence="6">Competition experiments between isogenic strains with or without the tisB/istR-1 region were performed. In the presence of DNA-damaging agents deletion strains were disadvantaged and were almost extinct by 4 days.</text>
</comment>
<comment type="caution">
    <text evidence="8">Originally tisA and tisB were fused into one ORF by frameshift reconstruction. TisA is probably a pseudogene.</text>
</comment>
<gene>
    <name type="primary">tisB</name>
    <name type="synonym">ysdB</name>
    <name type="ordered locus">b4618</name>
    <name type="ordered locus">JW3649</name>
</gene>
<feature type="chain" id="PRO_0000311834" description="Small toxic protein TisB">
    <location>
        <begin position="1"/>
        <end position="29"/>
    </location>
</feature>
<feature type="transmembrane region" description="Helical" evidence="1">
    <location>
        <begin position="6"/>
        <end position="28"/>
    </location>
</feature>
<proteinExistence type="evidence at protein level"/>
<protein>
    <recommendedName>
        <fullName>Small toxic protein TisB</fullName>
    </recommendedName>
    <alternativeName>
        <fullName>LexA-regulated protein TisB</fullName>
    </alternativeName>
</protein>
<evidence type="ECO:0000255" key="1"/>
<evidence type="ECO:0000269" key="2">
    <source>
    </source>
</evidence>
<evidence type="ECO:0000269" key="3">
    <source>
    </source>
</evidence>
<evidence type="ECO:0000269" key="4">
    <source>
    </source>
</evidence>
<evidence type="ECO:0000269" key="5">
    <source>
    </source>
</evidence>
<evidence type="ECO:0000269" key="6">
    <source>
    </source>
</evidence>
<evidence type="ECO:0000269" key="7">
    <source>
    </source>
</evidence>
<evidence type="ECO:0000305" key="8"/>
<evidence type="ECO:0000305" key="9">
    <source>
    </source>
</evidence>
<name>TISB_ECOLI</name>
<reference key="1">
    <citation type="journal article" date="1997" name="Science">
        <title>The complete genome sequence of Escherichia coli K-12.</title>
        <authorList>
            <person name="Blattner F.R."/>
            <person name="Plunkett G. III"/>
            <person name="Bloch C.A."/>
            <person name="Perna N.T."/>
            <person name="Burland V."/>
            <person name="Riley M."/>
            <person name="Collado-Vides J."/>
            <person name="Glasner J.D."/>
            <person name="Rode C.K."/>
            <person name="Mayhew G.F."/>
            <person name="Gregor J."/>
            <person name="Davis N.W."/>
            <person name="Kirkpatrick H.A."/>
            <person name="Goeden M.A."/>
            <person name="Rose D.J."/>
            <person name="Mau B."/>
            <person name="Shao Y."/>
        </authorList>
    </citation>
    <scope>NUCLEOTIDE SEQUENCE [LARGE SCALE GENOMIC DNA]</scope>
    <source>
        <strain>K12 / MG1655 / ATCC 47076</strain>
    </source>
</reference>
<reference key="2">
    <citation type="journal article" date="2006" name="Mol. Syst. Biol.">
        <title>Highly accurate genome sequences of Escherichia coli K-12 strains MG1655 and W3110.</title>
        <authorList>
            <person name="Hayashi K."/>
            <person name="Morooka N."/>
            <person name="Yamamoto Y."/>
            <person name="Fujita K."/>
            <person name="Isono K."/>
            <person name="Choi S."/>
            <person name="Ohtsubo E."/>
            <person name="Baba T."/>
            <person name="Wanner B.L."/>
            <person name="Mori H."/>
            <person name="Horiuchi T."/>
        </authorList>
    </citation>
    <scope>NUCLEOTIDE SEQUENCE [LARGE SCALE GENOMIC DNA]</scope>
    <source>
        <strain>K12 / W3110 / ATCC 27325 / DSM 5911</strain>
    </source>
</reference>
<reference key="3">
    <citation type="journal article" date="2000" name="Mol. Microbiol.">
        <title>Identification of additional genes belonging to the LexA regulon in Escherichia coli.</title>
        <authorList>
            <person name="Fernandez De Henestrosa A.R."/>
            <person name="Ogi T."/>
            <person name="Aoyagi S."/>
            <person name="Chafin D."/>
            <person name="Hayes J.J."/>
            <person name="Ohmori H."/>
            <person name="Woodgate R."/>
        </authorList>
    </citation>
    <scope>REGULATION BY LEXA</scope>
    <scope>INDUCTION</scope>
    <source>
        <strain>K12 / RW118</strain>
    </source>
</reference>
<reference key="4">
    <citation type="journal article" date="2004" name="Curr. Biol.">
        <title>The small RNA IstR inhibits synthesis of an SOS-induced toxic peptide.</title>
        <authorList>
            <person name="Vogel J."/>
            <person name="Argaman L."/>
            <person name="Wagner E.G.H."/>
            <person name="Altuvia S."/>
        </authorList>
    </citation>
    <scope>FUNCTION</scope>
    <scope>INDUCTION</scope>
    <source>
        <strain>K12</strain>
    </source>
</reference>
<reference key="5">
    <citation type="journal article" date="2007" name="Mol. Cell">
        <title>An antisense RNA inhibits translation by competing with standby ribosomes.</title>
        <authorList>
            <person name="Darfeuille F."/>
            <person name="Unoson C."/>
            <person name="Vogel J."/>
            <person name="Wagner E.G.H."/>
        </authorList>
    </citation>
    <scope>INDUCTION</scope>
    <source>
        <strain>K12</strain>
    </source>
</reference>
<reference key="6">
    <citation type="journal article" date="2008" name="Mol. Microbiol.">
        <title>A small SOS-induced toxin is targeted against the inner membrane in Escherichia coli.</title>
        <authorList>
            <person name="Unoson C."/>
            <person name="Wagner E.G.H."/>
        </authorList>
    </citation>
    <scope>FUNCTION</scope>
    <scope>SUBCELLULAR LOCATION</scope>
    <scope>DISRUPTION PHENOTYPE</scope>
</reference>
<reference key="7">
    <citation type="journal article" date="2008" name="Mol. Microbiol.">
        <title>Repression of small toxic protein synthesis by the Sib and OhsC small RNAs.</title>
        <authorList>
            <person name="Fozo E.M."/>
            <person name="Kawano M."/>
            <person name="Fontaine F."/>
            <person name="Kaya Y."/>
            <person name="Mendieta K.S."/>
            <person name="Jones K.L."/>
            <person name="Ocampo A."/>
            <person name="Rudd K.E."/>
            <person name="Storz G."/>
        </authorList>
    </citation>
    <scope>FUNCTION</scope>
    <source>
        <strain>K12 / MG1655 / ATCC 47076</strain>
    </source>
</reference>
<reference key="8">
    <citation type="journal article" date="2014" name="J. Mol. Microbiol. Biotechnol.">
        <title>Characterization of LdrA (long direct repeat A) protein of Escherichia coli.</title>
        <authorList>
            <person name="Yamaguchi Y."/>
            <person name="Tokunaga N."/>
            <person name="Inouye M."/>
            <person name="Phadtare S."/>
        </authorList>
    </citation>
    <scope>FUNCTION AS A TOXIN</scope>
    <scope>SUBCELLULAR LOCATION</scope>
</reference>
<organism>
    <name type="scientific">Escherichia coli (strain K12)</name>
    <dbReference type="NCBI Taxonomy" id="83333"/>
    <lineage>
        <taxon>Bacteria</taxon>
        <taxon>Pseudomonadati</taxon>
        <taxon>Pseudomonadota</taxon>
        <taxon>Gammaproteobacteria</taxon>
        <taxon>Enterobacterales</taxon>
        <taxon>Enterobacteriaceae</taxon>
        <taxon>Escherichia</taxon>
    </lineage>
</organism>
<dbReference type="EMBL" id="U00096">
    <property type="protein sequence ID" value="ABP93456.1"/>
    <property type="molecule type" value="Genomic_DNA"/>
</dbReference>
<dbReference type="EMBL" id="AP009048">
    <property type="status" value="NOT_ANNOTATED_CDS"/>
    <property type="molecule type" value="Genomic_DNA"/>
</dbReference>
<dbReference type="RefSeq" id="WP_001054909.1">
    <property type="nucleotide sequence ID" value="NZ_SSZK01000035.1"/>
</dbReference>
<dbReference type="RefSeq" id="YP_001165331.1">
    <property type="nucleotide sequence ID" value="NC_000913.3"/>
</dbReference>
<dbReference type="FunCoup" id="A5A627">
    <property type="interactions" value="1"/>
</dbReference>
<dbReference type="STRING" id="511145.b4618"/>
<dbReference type="TCDB" id="1.C.103.1.1">
    <property type="family name" value="the pore-forming toxin, tisb (tisb) family"/>
</dbReference>
<dbReference type="PaxDb" id="511145-b4618"/>
<dbReference type="EnsemblBacteria" id="ABP93456">
    <property type="protein sequence ID" value="ABP93456"/>
    <property type="gene ID" value="b4618"/>
</dbReference>
<dbReference type="GeneID" id="5061527"/>
<dbReference type="KEGG" id="eco:b4618"/>
<dbReference type="KEGG" id="ecoc:C3026_19915"/>
<dbReference type="PATRIC" id="fig|83333.103.peg.4606"/>
<dbReference type="InParanoid" id="A5A627"/>
<dbReference type="BioCyc" id="EcoCyc:MONOMER0-1922"/>
<dbReference type="PRO" id="PR:A5A627"/>
<dbReference type="Proteomes" id="UP000000625">
    <property type="component" value="Chromosome"/>
</dbReference>
<dbReference type="GO" id="GO:0016020">
    <property type="term" value="C:membrane"/>
    <property type="evidence" value="ECO:0000314"/>
    <property type="project" value="EcoCyc"/>
</dbReference>
<dbReference type="GO" id="GO:0005886">
    <property type="term" value="C:plasma membrane"/>
    <property type="evidence" value="ECO:0000314"/>
    <property type="project" value="EcoCyc"/>
</dbReference>
<dbReference type="GO" id="GO:0005253">
    <property type="term" value="F:monoatomic anion channel activity"/>
    <property type="evidence" value="ECO:0000314"/>
    <property type="project" value="EcoCyc"/>
</dbReference>
<dbReference type="GO" id="GO:0006974">
    <property type="term" value="P:DNA damage response"/>
    <property type="evidence" value="ECO:0000270"/>
    <property type="project" value="EcoliWiki"/>
</dbReference>
<dbReference type="GO" id="GO:0022611">
    <property type="term" value="P:dormancy process"/>
    <property type="evidence" value="ECO:0000315"/>
    <property type="project" value="EcoCyc"/>
</dbReference>
<dbReference type="GO" id="GO:0009432">
    <property type="term" value="P:SOS response"/>
    <property type="evidence" value="ECO:0000315"/>
    <property type="project" value="EcoCyc"/>
</dbReference>
<dbReference type="InterPro" id="IPR025211">
    <property type="entry name" value="TisB_toxin"/>
</dbReference>
<dbReference type="NCBIfam" id="NF011340">
    <property type="entry name" value="PRK14754.1"/>
    <property type="match status" value="1"/>
</dbReference>
<dbReference type="NCBIfam" id="TIGR04459">
    <property type="entry name" value="TisB_tox"/>
    <property type="match status" value="1"/>
</dbReference>
<dbReference type="Pfam" id="PF13939">
    <property type="entry name" value="TisB_toxin"/>
    <property type="match status" value="1"/>
</dbReference>
<sequence>MNLVDIAILILKLIVAALQLLDAVLKYLK</sequence>